<reference key="1">
    <citation type="submission" date="2008-02" db="EMBL/GenBank/DDBJ databases">
        <title>Complete sequence of Shewanella woodyi ATCC 51908.</title>
        <authorList>
            <consortium name="US DOE Joint Genome Institute"/>
            <person name="Copeland A."/>
            <person name="Lucas S."/>
            <person name="Lapidus A."/>
            <person name="Glavina del Rio T."/>
            <person name="Dalin E."/>
            <person name="Tice H."/>
            <person name="Bruce D."/>
            <person name="Goodwin L."/>
            <person name="Pitluck S."/>
            <person name="Sims D."/>
            <person name="Brettin T."/>
            <person name="Detter J.C."/>
            <person name="Han C."/>
            <person name="Kuske C.R."/>
            <person name="Schmutz J."/>
            <person name="Larimer F."/>
            <person name="Land M."/>
            <person name="Hauser L."/>
            <person name="Kyrpides N."/>
            <person name="Lykidis A."/>
            <person name="Zhao J.-S."/>
            <person name="Richardson P."/>
        </authorList>
    </citation>
    <scope>NUCLEOTIDE SEQUENCE [LARGE SCALE GENOMIC DNA]</scope>
    <source>
        <strain>ATCC 51908 / MS32</strain>
    </source>
</reference>
<proteinExistence type="inferred from homology"/>
<comment type="function">
    <text evidence="1">NDH-1 shuttles electrons from NADH, via FMN and iron-sulfur (Fe-S) centers, to quinones in the respiratory chain. The immediate electron acceptor for the enzyme in this species is believed to be ubiquinone. Couples the redox reaction to proton translocation (for every two electrons transferred, four hydrogen ions are translocated across the cytoplasmic membrane), and thus conserves the redox energy in a proton gradient.</text>
</comment>
<comment type="catalytic activity">
    <reaction evidence="1">
        <text>a quinone + NADH + 5 H(+)(in) = a quinol + NAD(+) + 4 H(+)(out)</text>
        <dbReference type="Rhea" id="RHEA:57888"/>
        <dbReference type="ChEBI" id="CHEBI:15378"/>
        <dbReference type="ChEBI" id="CHEBI:24646"/>
        <dbReference type="ChEBI" id="CHEBI:57540"/>
        <dbReference type="ChEBI" id="CHEBI:57945"/>
        <dbReference type="ChEBI" id="CHEBI:132124"/>
    </reaction>
</comment>
<comment type="cofactor">
    <cofactor evidence="1">
        <name>[4Fe-4S] cluster</name>
        <dbReference type="ChEBI" id="CHEBI:49883"/>
    </cofactor>
    <text evidence="1">Binds 2 [4Fe-4S] clusters per subunit.</text>
</comment>
<comment type="subunit">
    <text evidence="1">NDH-1 is composed of 13 different subunits. Subunits NuoA, H, J, K, L, M, N constitute the membrane sector of the complex.</text>
</comment>
<comment type="subcellular location">
    <subcellularLocation>
        <location evidence="1">Cell inner membrane</location>
        <topology evidence="1">Peripheral membrane protein</topology>
    </subcellularLocation>
</comment>
<comment type="similarity">
    <text evidence="1">Belongs to the complex I 23 kDa subunit family.</text>
</comment>
<name>NUOI_SHEWM</name>
<sequence length="171" mass="19419">MLSQIRTLITILKHTFTRADTVEYPEQKPYLSPRYRGRIVLTRDPDGEERCVACNLCSVACPVDCISVVKTEKEDGRWEAESFTINFSRCIMCGFCEEACPTHAIQLTPDVEMAEYDRQNLVFEKEHLLISGPGKYHDYNFYKVSGKAINGKGKGEAHNEQSPINVRSLLP</sequence>
<keyword id="KW-0004">4Fe-4S</keyword>
<keyword id="KW-0997">Cell inner membrane</keyword>
<keyword id="KW-1003">Cell membrane</keyword>
<keyword id="KW-0408">Iron</keyword>
<keyword id="KW-0411">Iron-sulfur</keyword>
<keyword id="KW-0472">Membrane</keyword>
<keyword id="KW-0479">Metal-binding</keyword>
<keyword id="KW-0520">NAD</keyword>
<keyword id="KW-0874">Quinone</keyword>
<keyword id="KW-1185">Reference proteome</keyword>
<keyword id="KW-0677">Repeat</keyword>
<keyword id="KW-1278">Translocase</keyword>
<keyword id="KW-0830">Ubiquinone</keyword>
<gene>
    <name evidence="1" type="primary">nuoI</name>
    <name type="ordered locus">Swoo_2867</name>
</gene>
<protein>
    <recommendedName>
        <fullName evidence="1">NADH-quinone oxidoreductase subunit I</fullName>
        <ecNumber evidence="1">7.1.1.-</ecNumber>
    </recommendedName>
    <alternativeName>
        <fullName evidence="1">NADH dehydrogenase I subunit I</fullName>
    </alternativeName>
    <alternativeName>
        <fullName evidence="1">NDH-1 subunit I</fullName>
    </alternativeName>
</protein>
<organism>
    <name type="scientific">Shewanella woodyi (strain ATCC 51908 / MS32)</name>
    <dbReference type="NCBI Taxonomy" id="392500"/>
    <lineage>
        <taxon>Bacteria</taxon>
        <taxon>Pseudomonadati</taxon>
        <taxon>Pseudomonadota</taxon>
        <taxon>Gammaproteobacteria</taxon>
        <taxon>Alteromonadales</taxon>
        <taxon>Shewanellaceae</taxon>
        <taxon>Shewanella</taxon>
    </lineage>
</organism>
<feature type="chain" id="PRO_1000143670" description="NADH-quinone oxidoreductase subunit I">
    <location>
        <begin position="1"/>
        <end position="171"/>
    </location>
</feature>
<feature type="domain" description="4Fe-4S ferredoxin-type 1" evidence="1">
    <location>
        <begin position="41"/>
        <end position="71"/>
    </location>
</feature>
<feature type="domain" description="4Fe-4S ferredoxin-type 2" evidence="1">
    <location>
        <begin position="81"/>
        <end position="110"/>
    </location>
</feature>
<feature type="binding site" evidence="1">
    <location>
        <position position="51"/>
    </location>
    <ligand>
        <name>[4Fe-4S] cluster</name>
        <dbReference type="ChEBI" id="CHEBI:49883"/>
        <label>1</label>
    </ligand>
</feature>
<feature type="binding site" evidence="1">
    <location>
        <position position="54"/>
    </location>
    <ligand>
        <name>[4Fe-4S] cluster</name>
        <dbReference type="ChEBI" id="CHEBI:49883"/>
        <label>1</label>
    </ligand>
</feature>
<feature type="binding site" evidence="1">
    <location>
        <position position="57"/>
    </location>
    <ligand>
        <name>[4Fe-4S] cluster</name>
        <dbReference type="ChEBI" id="CHEBI:49883"/>
        <label>1</label>
    </ligand>
</feature>
<feature type="binding site" evidence="1">
    <location>
        <position position="61"/>
    </location>
    <ligand>
        <name>[4Fe-4S] cluster</name>
        <dbReference type="ChEBI" id="CHEBI:49883"/>
        <label>2</label>
    </ligand>
</feature>
<feature type="binding site" evidence="1">
    <location>
        <position position="90"/>
    </location>
    <ligand>
        <name>[4Fe-4S] cluster</name>
        <dbReference type="ChEBI" id="CHEBI:49883"/>
        <label>2</label>
    </ligand>
</feature>
<feature type="binding site" evidence="1">
    <location>
        <position position="93"/>
    </location>
    <ligand>
        <name>[4Fe-4S] cluster</name>
        <dbReference type="ChEBI" id="CHEBI:49883"/>
        <label>2</label>
    </ligand>
</feature>
<feature type="binding site" evidence="1">
    <location>
        <position position="96"/>
    </location>
    <ligand>
        <name>[4Fe-4S] cluster</name>
        <dbReference type="ChEBI" id="CHEBI:49883"/>
        <label>2</label>
    </ligand>
</feature>
<feature type="binding site" evidence="1">
    <location>
        <position position="100"/>
    </location>
    <ligand>
        <name>[4Fe-4S] cluster</name>
        <dbReference type="ChEBI" id="CHEBI:49883"/>
        <label>1</label>
    </ligand>
</feature>
<accession>B1KJV5</accession>
<evidence type="ECO:0000255" key="1">
    <source>
        <dbReference type="HAMAP-Rule" id="MF_01351"/>
    </source>
</evidence>
<dbReference type="EC" id="7.1.1.-" evidence="1"/>
<dbReference type="EMBL" id="CP000961">
    <property type="protein sequence ID" value="ACA87142.1"/>
    <property type="molecule type" value="Genomic_DNA"/>
</dbReference>
<dbReference type="RefSeq" id="WP_012325478.1">
    <property type="nucleotide sequence ID" value="NC_010506.1"/>
</dbReference>
<dbReference type="SMR" id="B1KJV5"/>
<dbReference type="STRING" id="392500.Swoo_2867"/>
<dbReference type="KEGG" id="swd:Swoo_2867"/>
<dbReference type="eggNOG" id="COG1143">
    <property type="taxonomic scope" value="Bacteria"/>
</dbReference>
<dbReference type="HOGENOM" id="CLU_067218_4_3_6"/>
<dbReference type="Proteomes" id="UP000002168">
    <property type="component" value="Chromosome"/>
</dbReference>
<dbReference type="GO" id="GO:0005886">
    <property type="term" value="C:plasma membrane"/>
    <property type="evidence" value="ECO:0007669"/>
    <property type="project" value="UniProtKB-SubCell"/>
</dbReference>
<dbReference type="GO" id="GO:0051539">
    <property type="term" value="F:4 iron, 4 sulfur cluster binding"/>
    <property type="evidence" value="ECO:0007669"/>
    <property type="project" value="UniProtKB-KW"/>
</dbReference>
<dbReference type="GO" id="GO:0005506">
    <property type="term" value="F:iron ion binding"/>
    <property type="evidence" value="ECO:0007669"/>
    <property type="project" value="UniProtKB-UniRule"/>
</dbReference>
<dbReference type="GO" id="GO:0050136">
    <property type="term" value="F:NADH:ubiquinone reductase (non-electrogenic) activity"/>
    <property type="evidence" value="ECO:0007669"/>
    <property type="project" value="UniProtKB-UniRule"/>
</dbReference>
<dbReference type="GO" id="GO:0048038">
    <property type="term" value="F:quinone binding"/>
    <property type="evidence" value="ECO:0007669"/>
    <property type="project" value="UniProtKB-KW"/>
</dbReference>
<dbReference type="GO" id="GO:0009060">
    <property type="term" value="P:aerobic respiration"/>
    <property type="evidence" value="ECO:0007669"/>
    <property type="project" value="TreeGrafter"/>
</dbReference>
<dbReference type="FunFam" id="3.30.70.3270:FF:000002">
    <property type="entry name" value="NADH-quinone oxidoreductase subunit I"/>
    <property type="match status" value="1"/>
</dbReference>
<dbReference type="Gene3D" id="3.30.70.3270">
    <property type="match status" value="1"/>
</dbReference>
<dbReference type="HAMAP" id="MF_01351">
    <property type="entry name" value="NDH1_NuoI"/>
    <property type="match status" value="1"/>
</dbReference>
<dbReference type="InterPro" id="IPR017896">
    <property type="entry name" value="4Fe4S_Fe-S-bd"/>
</dbReference>
<dbReference type="InterPro" id="IPR017900">
    <property type="entry name" value="4Fe4S_Fe_S_CS"/>
</dbReference>
<dbReference type="InterPro" id="IPR010226">
    <property type="entry name" value="NADH_quinone_OxRdtase_chainI"/>
</dbReference>
<dbReference type="NCBIfam" id="TIGR01971">
    <property type="entry name" value="NuoI"/>
    <property type="match status" value="1"/>
</dbReference>
<dbReference type="NCBIfam" id="NF004536">
    <property type="entry name" value="PRK05888.1-1"/>
    <property type="match status" value="1"/>
</dbReference>
<dbReference type="PANTHER" id="PTHR10849:SF20">
    <property type="entry name" value="NADH DEHYDROGENASE [UBIQUINONE] IRON-SULFUR PROTEIN 8, MITOCHONDRIAL"/>
    <property type="match status" value="1"/>
</dbReference>
<dbReference type="PANTHER" id="PTHR10849">
    <property type="entry name" value="NADH DEHYDROGENASE UBIQUINONE IRON-SULFUR PROTEIN 8, MITOCHONDRIAL"/>
    <property type="match status" value="1"/>
</dbReference>
<dbReference type="Pfam" id="PF12838">
    <property type="entry name" value="Fer4_7"/>
    <property type="match status" value="1"/>
</dbReference>
<dbReference type="SUPFAM" id="SSF54862">
    <property type="entry name" value="4Fe-4S ferredoxins"/>
    <property type="match status" value="1"/>
</dbReference>
<dbReference type="PROSITE" id="PS00198">
    <property type="entry name" value="4FE4S_FER_1"/>
    <property type="match status" value="2"/>
</dbReference>
<dbReference type="PROSITE" id="PS51379">
    <property type="entry name" value="4FE4S_FER_2"/>
    <property type="match status" value="2"/>
</dbReference>